<dbReference type="EMBL" id="D88802">
    <property type="protein sequence ID" value="BAA19704.1"/>
    <property type="status" value="ALT_FRAME"/>
    <property type="molecule type" value="Genomic_DNA"/>
</dbReference>
<dbReference type="EMBL" id="AL009126">
    <property type="protein sequence ID" value="CAB12399.2"/>
    <property type="molecule type" value="Genomic_DNA"/>
</dbReference>
<dbReference type="PIR" id="H69784">
    <property type="entry name" value="H69784"/>
</dbReference>
<dbReference type="RefSeq" id="NP_388461.2">
    <property type="nucleotide sequence ID" value="NC_000964.3"/>
</dbReference>
<dbReference type="RefSeq" id="WP_003234105.1">
    <property type="nucleotide sequence ID" value="NZ_OZ025638.1"/>
</dbReference>
<dbReference type="SMR" id="Q797E3"/>
<dbReference type="FunCoup" id="Q797E3">
    <property type="interactions" value="161"/>
</dbReference>
<dbReference type="STRING" id="224308.BSU05800"/>
<dbReference type="TCDB" id="2.A.1.2.25">
    <property type="family name" value="the major facilitator superfamily (mfs)"/>
</dbReference>
<dbReference type="PaxDb" id="224308-BSU05800"/>
<dbReference type="EnsemblBacteria" id="CAB12399">
    <property type="protein sequence ID" value="CAB12399"/>
    <property type="gene ID" value="BSU_05800"/>
</dbReference>
<dbReference type="GeneID" id="937996"/>
<dbReference type="KEGG" id="bsu:BSU05800"/>
<dbReference type="PATRIC" id="fig|224308.179.peg.624"/>
<dbReference type="eggNOG" id="COG2814">
    <property type="taxonomic scope" value="Bacteria"/>
</dbReference>
<dbReference type="InParanoid" id="Q797E3"/>
<dbReference type="OrthoDB" id="2727100at2"/>
<dbReference type="PhylomeDB" id="Q797E3"/>
<dbReference type="BioCyc" id="BSUB:BSU05800-MONOMER"/>
<dbReference type="Proteomes" id="UP000001570">
    <property type="component" value="Chromosome"/>
</dbReference>
<dbReference type="GO" id="GO:0005886">
    <property type="term" value="C:plasma membrane"/>
    <property type="evidence" value="ECO:0000318"/>
    <property type="project" value="GO_Central"/>
</dbReference>
<dbReference type="GO" id="GO:0022857">
    <property type="term" value="F:transmembrane transporter activity"/>
    <property type="evidence" value="ECO:0000318"/>
    <property type="project" value="GO_Central"/>
</dbReference>
<dbReference type="GO" id="GO:0055085">
    <property type="term" value="P:transmembrane transport"/>
    <property type="evidence" value="ECO:0000318"/>
    <property type="project" value="GO_Central"/>
</dbReference>
<dbReference type="CDD" id="cd17324">
    <property type="entry name" value="MFS_NepI_like"/>
    <property type="match status" value="1"/>
</dbReference>
<dbReference type="Gene3D" id="1.20.1250.20">
    <property type="entry name" value="MFS general substrate transporter like domains"/>
    <property type="match status" value="2"/>
</dbReference>
<dbReference type="InterPro" id="IPR011701">
    <property type="entry name" value="MFS"/>
</dbReference>
<dbReference type="InterPro" id="IPR020846">
    <property type="entry name" value="MFS_dom"/>
</dbReference>
<dbReference type="InterPro" id="IPR050189">
    <property type="entry name" value="MFS_Efflux_Transporters"/>
</dbReference>
<dbReference type="InterPro" id="IPR036259">
    <property type="entry name" value="MFS_trans_sf"/>
</dbReference>
<dbReference type="PANTHER" id="PTHR43124">
    <property type="entry name" value="PURINE EFFLUX PUMP PBUE"/>
    <property type="match status" value="1"/>
</dbReference>
<dbReference type="PANTHER" id="PTHR43124:SF10">
    <property type="entry name" value="PURINE EFFLUX PUMP PBUE"/>
    <property type="match status" value="1"/>
</dbReference>
<dbReference type="Pfam" id="PF07690">
    <property type="entry name" value="MFS_1"/>
    <property type="match status" value="1"/>
</dbReference>
<dbReference type="SUPFAM" id="SSF103473">
    <property type="entry name" value="MFS general substrate transporter"/>
    <property type="match status" value="1"/>
</dbReference>
<dbReference type="PROSITE" id="PS50850">
    <property type="entry name" value="MFS"/>
    <property type="match status" value="1"/>
</dbReference>
<sequence>MNFKVFLLAASTIAVGLVELIVGGILPQIANDLDISIVSAGQLISVFALGYAVSGPLLLALTAKIERKRLYLIALFVFFLSNLVAYFSPNFATLMVSRVLAAMSTGLIVVLSLTIAPKIVAPEYRARAIGIIFMGFSSAIALGVPLGILISDSFGWRILFLGIGLLALISMLIISIFFERIPAEKMIPFREQLKTIGNLKIASSHLVTMFTLAGHYTLYAYFAPFLEETLHLSSFWVSICYFLFGISAVCGGPFGGALSDRLGSFKSILLVTGSFAIIMFLLPLSTSSMIFFLPVMVIWGLLSWSLAPAQQSYLIEIAPDSSDIQQSFNTSALQVGIALGSAIGGVVLDQTGTVVSTAWCGGSIVIIAVLFAFISLTRPVQTAKKSSL</sequence>
<protein>
    <recommendedName>
        <fullName>Purine efflux pump PbuE</fullName>
    </recommendedName>
</protein>
<name>PBUE_BACSU</name>
<gene>
    <name type="primary">pbuE</name>
    <name type="synonym">ydhL</name>
    <name type="ordered locus">BSU05800</name>
</gene>
<evidence type="ECO:0000255" key="1"/>
<evidence type="ECO:0000269" key="2">
    <source>
    </source>
</evidence>
<evidence type="ECO:0000269" key="3">
    <source>
    </source>
</evidence>
<evidence type="ECO:0000269" key="4">
    <source>
    </source>
</evidence>
<evidence type="ECO:0000305" key="5"/>
<feature type="chain" id="PRO_0000367245" description="Purine efflux pump PbuE">
    <location>
        <begin position="1"/>
        <end position="388"/>
    </location>
</feature>
<feature type="transmembrane region" description="Helical" evidence="1">
    <location>
        <begin position="5"/>
        <end position="25"/>
    </location>
</feature>
<feature type="transmembrane region" description="Helical" evidence="1">
    <location>
        <begin position="43"/>
        <end position="63"/>
    </location>
</feature>
<feature type="transmembrane region" description="Helical" evidence="1">
    <location>
        <begin position="72"/>
        <end position="92"/>
    </location>
</feature>
<feature type="transmembrane region" description="Helical" evidence="1">
    <location>
        <begin position="99"/>
        <end position="119"/>
    </location>
</feature>
<feature type="transmembrane region" description="Helical" evidence="1">
    <location>
        <begin position="129"/>
        <end position="149"/>
    </location>
</feature>
<feature type="transmembrane region" description="Helical" evidence="1">
    <location>
        <begin position="158"/>
        <end position="178"/>
    </location>
</feature>
<feature type="transmembrane region" description="Helical" evidence="1">
    <location>
        <begin position="206"/>
        <end position="226"/>
    </location>
</feature>
<feature type="transmembrane region" description="Helical" evidence="1">
    <location>
        <begin position="235"/>
        <end position="255"/>
    </location>
</feature>
<feature type="transmembrane region" description="Helical" evidence="1">
    <location>
        <begin position="262"/>
        <end position="282"/>
    </location>
</feature>
<feature type="transmembrane region" description="Helical" evidence="1">
    <location>
        <begin position="289"/>
        <end position="309"/>
    </location>
</feature>
<feature type="transmembrane region" description="Helical" evidence="1">
    <location>
        <begin position="328"/>
        <end position="348"/>
    </location>
</feature>
<feature type="transmembrane region" description="Helical" evidence="1">
    <location>
        <begin position="354"/>
        <end position="374"/>
    </location>
</feature>
<organism>
    <name type="scientific">Bacillus subtilis (strain 168)</name>
    <dbReference type="NCBI Taxonomy" id="224308"/>
    <lineage>
        <taxon>Bacteria</taxon>
        <taxon>Bacillati</taxon>
        <taxon>Bacillota</taxon>
        <taxon>Bacilli</taxon>
        <taxon>Bacillales</taxon>
        <taxon>Bacillaceae</taxon>
        <taxon>Bacillus</taxon>
    </lineage>
</organism>
<keyword id="KW-1003">Cell membrane</keyword>
<keyword id="KW-0472">Membrane</keyword>
<keyword id="KW-1185">Reference proteome</keyword>
<keyword id="KW-0812">Transmembrane</keyword>
<keyword id="KW-1133">Transmembrane helix</keyword>
<keyword id="KW-0813">Transport</keyword>
<proteinExistence type="evidence at protein level"/>
<accession>Q797E3</accession>
<accession>O05504</accession>
<comment type="function">
    <text evidence="2 4">Involved in the efflux of purine ribonucleosides, such as guanosine, adenosine and inosine, as well as purine bases guanine, adenine and hypoxanthine, and purine base analogs 2,6-diaminopurine, 6-mercaptopurine and 2-fluoroadenine. Therefore plays a role in maintaining the cellular purine base pools and protecting cells against toxic purine base analogs. Modulates expression of the purR and G-box regulons.</text>
</comment>
<comment type="subcellular location">
    <subcellularLocation>
        <location evidence="5">Cell membrane</location>
        <topology evidence="5">Multi-pass membrane protein</topology>
    </subcellularLocation>
</comment>
<comment type="induction">
    <text evidence="2 3 4">Up-regulated by adenine, via the adenine-dependent riboswitch. Also up-regulated by hypoxanthine and guanine.</text>
</comment>
<comment type="similarity">
    <text evidence="5">Belongs to the major facilitator superfamily. DHA1 family. PbuE (TC 2.A.1.2.25) subfamily.</text>
</comment>
<comment type="sequence caution" evidence="5">
    <conflict type="frameshift">
        <sequence resource="EMBL-CDS" id="BAA19704"/>
    </conflict>
</comment>
<reference key="1">
    <citation type="journal article" date="1997" name="Microbiology">
        <title>Nucleotide sequence and analysis of the phoB-rrnE-groESL region of the Bacillus subtilis chromosome.</title>
        <authorList>
            <person name="Sadaie Y."/>
            <person name="Yata K."/>
            <person name="Fujita M."/>
            <person name="Sagai H."/>
            <person name="Itaya M."/>
            <person name="Kasahara Y."/>
            <person name="Ogasawara N."/>
        </authorList>
    </citation>
    <scope>NUCLEOTIDE SEQUENCE [GENOMIC DNA]</scope>
    <source>
        <strain>168</strain>
    </source>
</reference>
<reference key="2">
    <citation type="journal article" date="1997" name="Nature">
        <title>The complete genome sequence of the Gram-positive bacterium Bacillus subtilis.</title>
        <authorList>
            <person name="Kunst F."/>
            <person name="Ogasawara N."/>
            <person name="Moszer I."/>
            <person name="Albertini A.M."/>
            <person name="Alloni G."/>
            <person name="Azevedo V."/>
            <person name="Bertero M.G."/>
            <person name="Bessieres P."/>
            <person name="Bolotin A."/>
            <person name="Borchert S."/>
            <person name="Borriss R."/>
            <person name="Boursier L."/>
            <person name="Brans A."/>
            <person name="Braun M."/>
            <person name="Brignell S.C."/>
            <person name="Bron S."/>
            <person name="Brouillet S."/>
            <person name="Bruschi C.V."/>
            <person name="Caldwell B."/>
            <person name="Capuano V."/>
            <person name="Carter N.M."/>
            <person name="Choi S.-K."/>
            <person name="Codani J.-J."/>
            <person name="Connerton I.F."/>
            <person name="Cummings N.J."/>
            <person name="Daniel R.A."/>
            <person name="Denizot F."/>
            <person name="Devine K.M."/>
            <person name="Duesterhoeft A."/>
            <person name="Ehrlich S.D."/>
            <person name="Emmerson P.T."/>
            <person name="Entian K.-D."/>
            <person name="Errington J."/>
            <person name="Fabret C."/>
            <person name="Ferrari E."/>
            <person name="Foulger D."/>
            <person name="Fritz C."/>
            <person name="Fujita M."/>
            <person name="Fujita Y."/>
            <person name="Fuma S."/>
            <person name="Galizzi A."/>
            <person name="Galleron N."/>
            <person name="Ghim S.-Y."/>
            <person name="Glaser P."/>
            <person name="Goffeau A."/>
            <person name="Golightly E.J."/>
            <person name="Grandi G."/>
            <person name="Guiseppi G."/>
            <person name="Guy B.J."/>
            <person name="Haga K."/>
            <person name="Haiech J."/>
            <person name="Harwood C.R."/>
            <person name="Henaut A."/>
            <person name="Hilbert H."/>
            <person name="Holsappel S."/>
            <person name="Hosono S."/>
            <person name="Hullo M.-F."/>
            <person name="Itaya M."/>
            <person name="Jones L.-M."/>
            <person name="Joris B."/>
            <person name="Karamata D."/>
            <person name="Kasahara Y."/>
            <person name="Klaerr-Blanchard M."/>
            <person name="Klein C."/>
            <person name="Kobayashi Y."/>
            <person name="Koetter P."/>
            <person name="Koningstein G."/>
            <person name="Krogh S."/>
            <person name="Kumano M."/>
            <person name="Kurita K."/>
            <person name="Lapidus A."/>
            <person name="Lardinois S."/>
            <person name="Lauber J."/>
            <person name="Lazarevic V."/>
            <person name="Lee S.-M."/>
            <person name="Levine A."/>
            <person name="Liu H."/>
            <person name="Masuda S."/>
            <person name="Mauel C."/>
            <person name="Medigue C."/>
            <person name="Medina N."/>
            <person name="Mellado R.P."/>
            <person name="Mizuno M."/>
            <person name="Moestl D."/>
            <person name="Nakai S."/>
            <person name="Noback M."/>
            <person name="Noone D."/>
            <person name="O'Reilly M."/>
            <person name="Ogawa K."/>
            <person name="Ogiwara A."/>
            <person name="Oudega B."/>
            <person name="Park S.-H."/>
            <person name="Parro V."/>
            <person name="Pohl T.M."/>
            <person name="Portetelle D."/>
            <person name="Porwollik S."/>
            <person name="Prescott A.M."/>
            <person name="Presecan E."/>
            <person name="Pujic P."/>
            <person name="Purnelle B."/>
            <person name="Rapoport G."/>
            <person name="Rey M."/>
            <person name="Reynolds S."/>
            <person name="Rieger M."/>
            <person name="Rivolta C."/>
            <person name="Rocha E."/>
            <person name="Roche B."/>
            <person name="Rose M."/>
            <person name="Sadaie Y."/>
            <person name="Sato T."/>
            <person name="Scanlan E."/>
            <person name="Schleich S."/>
            <person name="Schroeter R."/>
            <person name="Scoffone F."/>
            <person name="Sekiguchi J."/>
            <person name="Sekowska A."/>
            <person name="Seror S.J."/>
            <person name="Serror P."/>
            <person name="Shin B.-S."/>
            <person name="Soldo B."/>
            <person name="Sorokin A."/>
            <person name="Tacconi E."/>
            <person name="Takagi T."/>
            <person name="Takahashi H."/>
            <person name="Takemaru K."/>
            <person name="Takeuchi M."/>
            <person name="Tamakoshi A."/>
            <person name="Tanaka T."/>
            <person name="Terpstra P."/>
            <person name="Tognoni A."/>
            <person name="Tosato V."/>
            <person name="Uchiyama S."/>
            <person name="Vandenbol M."/>
            <person name="Vannier F."/>
            <person name="Vassarotti A."/>
            <person name="Viari A."/>
            <person name="Wambutt R."/>
            <person name="Wedler E."/>
            <person name="Wedler H."/>
            <person name="Weitzenegger T."/>
            <person name="Winters P."/>
            <person name="Wipat A."/>
            <person name="Yamamoto H."/>
            <person name="Yamane K."/>
            <person name="Yasumoto K."/>
            <person name="Yata K."/>
            <person name="Yoshida K."/>
            <person name="Yoshikawa H.-F."/>
            <person name="Zumstein E."/>
            <person name="Yoshikawa H."/>
            <person name="Danchin A."/>
        </authorList>
    </citation>
    <scope>NUCLEOTIDE SEQUENCE [LARGE SCALE GENOMIC DNA]</scope>
    <source>
        <strain>168</strain>
    </source>
</reference>
<reference key="3">
    <citation type="journal article" date="2003" name="J. Bacteriol.">
        <title>Definition of a second Bacillus subtilis pur regulon comprising the pur and xpt-pbuX operons plus pbuG, nupG (yxjA), and pbuE (ydhL).</title>
        <authorList>
            <person name="Johansen L.E."/>
            <person name="Nygaard P."/>
            <person name="Lassen C."/>
            <person name="Agersoe Y."/>
            <person name="Saxild H.H."/>
        </authorList>
    </citation>
    <scope>FUNCTION IN EFFLUX</scope>
    <scope>INDUCTION</scope>
    <source>
        <strain>168</strain>
    </source>
</reference>
<reference key="4">
    <citation type="journal article" date="2004" name="Nat. Struct. Mol. Biol.">
        <title>Adenine riboswitches and gene activation by disruption of a transcription terminator.</title>
        <authorList>
            <person name="Mandal M."/>
            <person name="Breaker R.R."/>
        </authorList>
    </citation>
    <scope>INDUCTION</scope>
</reference>
<reference key="5">
    <citation type="journal article" date="2005" name="J. Bacteriol.">
        <title>The purine efflux pump PbuE in Bacillus subtilis modulates expression of the PurR and G-box (XptR) regulons by adjusting the purine base pool size.</title>
        <authorList>
            <person name="Nygaard P."/>
            <person name="Saxild H.H."/>
        </authorList>
    </citation>
    <scope>FUNCTION AS AN EFFLUX PUMP</scope>
    <scope>INDUCTION</scope>
    <source>
        <strain>168</strain>
    </source>
</reference>